<comment type="function">
    <text evidence="3 4 5 6 7">Required for establishment of the axial budding pattern in yeast cells. May be involved in the selection of future sites of septation in hyphal cells. Contributes to morphogenesis and is important for induction of hyphal growth. Also plays a role in epithelial adherence, and is involved in intestinal colonization and systemic infection. The role in adhesion is probably minor compared with its role in morphogenesis.</text>
</comment>
<comment type="subcellular location">
    <subcellularLocation>
        <location>Cell surface</location>
    </subcellularLocation>
    <subcellularLocation>
        <location>Bud neck</location>
    </subcellularLocation>
    <subcellularLocation>
        <location>Spore</location>
        <location>Perispore</location>
    </subcellularLocation>
    <text>Localizes to a ring at the mother-bud neck of yeast and pseudohyphal cells. Localizes to single or double rings distal to the junction of the mother cell and germ tube in hyphal cells. Requires septins for proper localization. Also found at the cell-surface of blastospores.</text>
</comment>
<comment type="similarity">
    <text evidence="8">Belongs to the BUD4 family.</text>
</comment>
<organism>
    <name type="scientific">Candida albicans (strain SC5314 / ATCC MYA-2876)</name>
    <name type="common">Yeast</name>
    <dbReference type="NCBI Taxonomy" id="237561"/>
    <lineage>
        <taxon>Eukaryota</taxon>
        <taxon>Fungi</taxon>
        <taxon>Dikarya</taxon>
        <taxon>Ascomycota</taxon>
        <taxon>Saccharomycotina</taxon>
        <taxon>Pichiomycetes</taxon>
        <taxon>Debaryomycetaceae</taxon>
        <taxon>Candida/Lodderomyces clade</taxon>
        <taxon>Candida</taxon>
    </lineage>
</organism>
<name>BUD4_CANAL</name>
<sequence>MQTSISTTTIEDHLHHYSPEESQKLLSRESSINTDLFKHENESVDLLLKEMNSTPSKLLPIDKHSHLQLQPQSSSASIFNSPTKPLNFPRTNSKPSLDPNSSSDTYTSEQDQEKGKEEKKDTAFQTSFDRNFDLDNSIDIQQTIQHQQQQPQQQQQLPQTDNNLIDEFSFQTPMTSTLDLTKQNPTVDKINENHAPTYINTSPNKSIMKKATPKASPKKVAFTATNPEIHHYPDNRVEEEDQSQQKEDSVEPPSIQHQWKDPSQFNYSDEDTNASVPPTPPLHTTKPTFAQLLNKNNEVNSEPEALTDMKLKHENFSNLSLDEKVNLYLSPTNNNNSKNVSDMDSHLQNLQDASKNKTNENIHNLSFALKAPKNDIENPLNSLTNADISLRSSGSSQSSLQSLRDDNRVLESTPGSPKKVNPGLSLNDGIKGFSDEVVESLLPRDLSRDKLETTKENDAPEHNNENFIDAKSTNTNKGQLLVSSDDHLDSFDRSYNHTEQSILNLLNSASQSQISLNALEKQKQIQEQEQTQAAEPEEETSFSDNIKVKQEPKSNLEFVKVTIKKEPVSATEIKAPKREFSSRILRIKNEDEIAEPADIHPKKENEANSHVEDTDALLKKALNDDEESDTTQNSTKMSIRFHIDSDWKLEDSNDGDREDNDDISRFEKSDILNDVSQTSDIIGDKYGNSSSEITTKTLAPPRSDNNDKENSKSFEDPANNESSQQQLEVPHTKEDDSILANSSNIAPPEELTLPVVEANDYSSFNDVTKTFDAYSSFEESLSREHETDSKPINFISIWHKQEKQKKHQIHKVPTKQIIASYQQYKNEQESRVTSDKVKIPNAIQSKKFKEVNVMSRRVVSPDMDDLNVSQFLPELSEDSGFKDLNFANYSNNTNRPRSFTPLSTKNVLSNIDNDPNVVEPPEPKSYAEIRNARRLSANKAAPNQAPPLPPQRQPSSTRSNSNKRVSRFRVPTFEIRRTSSALAPCDMYNDIFDDFGAGSKPTIKAEGMKTLPSMDKDDVKRILNAKKGVTQDEYINAKLVDQKPKKNSIVTDPEDRYEELQQTASIHNATIDSSIYGRPDSISTDMLPYLSDELKKPPTALLSADRLFMEQEVHPLRSNSVLVHPGAGAATNSSMLPEPDFELINSPTRNVSNNSDNVAISGNASTISFNQLDMNFDDQATIGQKIQEQPASKSANTVRGDDDGLASAPETPRTPTKKESISSKPAKLSSASPRKSPIKIGSPVRVIKKNGSIAGIEPIPKATHKPKKSFQGNEISNHKVRDGGISPSSGSEHQQHNPSMVSVPSQYTDATSTVPDENKDVQHKPREKQKQKHHHRHHHHKQKTDIPGVVDDEIPDVGLQERGKLFFRVLGIKNINLPDINTHKGRFTLTLDNGVHCVTTPEYNMDDHNVAIGKEFELTVADSLEFILTLKASYEKPRGTLVEVTEKKVVKSRNRLSRLFGSKDIITTTKFVPTEVKDTWANKFAPDGSFARCYIDLQQFEDQITGKALQFDLNCFNEWETMSNGNQPMKRGKPYKIAQLEVKMLYVPRSDPREILPTSIRSAYESINELNNEQNNYFEGYLHQEGGDCPIFKKRFFKLMGTSLLAHSEISHKTRAKINLSKVVDLIYVDKENIDRSNHRNFSDVLLLDHAFKIKFANGELIDFCAPNKHEMKIWIQNLQEIIYRNRFRRQPWVNLMLQQQQQQQSSQQ</sequence>
<reference key="1">
    <citation type="journal article" date="2004" name="Proc. Natl. Acad. Sci. U.S.A.">
        <title>The diploid genome sequence of Candida albicans.</title>
        <authorList>
            <person name="Jones T."/>
            <person name="Federspiel N.A."/>
            <person name="Chibana H."/>
            <person name="Dungan J."/>
            <person name="Kalman S."/>
            <person name="Magee B.B."/>
            <person name="Newport G."/>
            <person name="Thorstenson Y.R."/>
            <person name="Agabian N."/>
            <person name="Magee P.T."/>
            <person name="Davis R.W."/>
            <person name="Scherer S."/>
        </authorList>
    </citation>
    <scope>NUCLEOTIDE SEQUENCE [LARGE SCALE GENOMIC DNA]</scope>
    <source>
        <strain>SC5314 / ATCC MYA-2876</strain>
    </source>
</reference>
<reference key="2">
    <citation type="journal article" date="2007" name="Genome Biol.">
        <title>Assembly of the Candida albicans genome into sixteen supercontigs aligned on the eight chromosomes.</title>
        <authorList>
            <person name="van het Hoog M."/>
            <person name="Rast T.J."/>
            <person name="Martchenko M."/>
            <person name="Grindle S."/>
            <person name="Dignard D."/>
            <person name="Hogues H."/>
            <person name="Cuomo C."/>
            <person name="Berriman M."/>
            <person name="Scherer S."/>
            <person name="Magee B.B."/>
            <person name="Whiteway M."/>
            <person name="Chibana H."/>
            <person name="Nantel A."/>
            <person name="Magee P.T."/>
        </authorList>
    </citation>
    <scope>GENOME REANNOTATION</scope>
    <source>
        <strain>SC5314 / ATCC MYA-2876</strain>
    </source>
</reference>
<reference key="3">
    <citation type="journal article" date="2013" name="Genome Biol.">
        <title>Assembly of a phased diploid Candida albicans genome facilitates allele-specific measurements and provides a simple model for repeat and indel structure.</title>
        <authorList>
            <person name="Muzzey D."/>
            <person name="Schwartz K."/>
            <person name="Weissman J.S."/>
            <person name="Sherlock G."/>
        </authorList>
    </citation>
    <scope>NUCLEOTIDE SEQUENCE [LARGE SCALE GENOMIC DNA]</scope>
    <scope>GENOME REANNOTATION</scope>
    <source>
        <strain>SC5314 / ATCC MYA-2876</strain>
    </source>
</reference>
<reference key="4">
    <citation type="journal article" date="1996" name="Proc. Natl. Acad. Sci. U.S.A.">
        <title>Cloning and expression of a gene encoding an integrin-like protein in Candida albicans.</title>
        <authorList>
            <person name="Gale C.A."/>
            <person name="Finkel D."/>
            <person name="Tao N."/>
            <person name="Meinke M."/>
            <person name="McClellan M."/>
            <person name="Olson J."/>
            <person name="Kendrick K."/>
            <person name="Hostetter M.K."/>
        </authorList>
    </citation>
    <scope>NUCLEOTIDE SEQUENCE [GENOMIC DNA] OF 42-1709</scope>
    <scope>SUBCELLULAR LOCATION</scope>
    <source>
        <strain>ATCC 10261 / CBS 2718 / NBRC 1061</strain>
    </source>
</reference>
<reference key="5">
    <citation type="journal article" date="1998" name="Science">
        <title>Linkage of adhesion, filamentous growth, and virulence in Candida albicans to a single gene, INT1.</title>
        <authorList>
            <person name="Gale C.A."/>
            <person name="Bendel C.M."/>
            <person name="McClellan M."/>
            <person name="Hauser M."/>
            <person name="Becker J.M."/>
            <person name="Berman J."/>
            <person name="Hostetter M.K."/>
        </authorList>
    </citation>
    <scope>FUNCTION IN CELL ADHESION</scope>
    <scope>SUBCELLULAR LOCATION</scope>
</reference>
<reference key="6">
    <citation type="journal article" date="1999" name="Mol. Genet. Metab.">
        <title>Systemic infection following intravenous inoculation of mice with Candida albicans int1 mutant strains.</title>
        <authorList>
            <person name="Bendel C.M."/>
            <person name="Kinneberg K.M."/>
            <person name="Jechorek R.P."/>
            <person name="Gale C.A."/>
            <person name="Erlandsen S.L."/>
            <person name="Hostetter M.K."/>
            <person name="Wells C.L."/>
        </authorList>
    </citation>
    <scope>FUNCTION</scope>
</reference>
<reference key="7">
    <citation type="journal article" date="2000" name="Shock">
        <title>The Candida albicans INT1 gene facilitates cecal colonization in endotoxin-treated mice.</title>
        <authorList>
            <person name="Bendel C.M."/>
            <person name="Kinneberg K.M."/>
            <person name="Jechorek R.P."/>
            <person name="Erlandsen S.L."/>
            <person name="Sahar D.E."/>
            <person name="Wells C.L."/>
        </authorList>
    </citation>
    <scope>FUNCTION</scope>
</reference>
<reference key="8">
    <citation type="journal article" date="2001" name="Mol. Biol. Cell">
        <title>Candida albicans Int1p interacts with the septin ring in yeast and hyphal cells.</title>
        <authorList>
            <person name="Gale C.A."/>
            <person name="Gerami-Nejad M."/>
            <person name="McClellan M."/>
            <person name="Vandoninck S."/>
            <person name="Longtine M.S."/>
            <person name="Berman J."/>
        </authorList>
    </citation>
    <scope>FUNCTION IN BUD SITE SELECTION</scope>
    <scope>SUBCELLULAR LOCATION</scope>
</reference>
<reference key="9">
    <citation type="journal article" date="2002" name="Crit. Care Med.">
        <title>Adherence of yeast and filamentous forms of Candida albicans to cultured enterocytes.</title>
        <authorList>
            <person name="Wiesner S.M."/>
            <person name="Bendel C.M."/>
            <person name="Hess D.J."/>
            <person name="Erlandsen S.L."/>
            <person name="Wells C.L."/>
        </authorList>
    </citation>
    <scope>FUNCTION IN CELL ADHESION</scope>
</reference>
<reference key="10">
    <citation type="journal article" date="2005" name="Med. Mycol.">
        <title>Intracellular trafficking of fluorescently tagged proteins associated with pathogenesis in Candida albicans.</title>
        <authorList>
            <person name="Lee S.A."/>
            <person name="Khalique Z."/>
            <person name="Gale C.A."/>
            <person name="Wong B."/>
        </authorList>
    </citation>
    <scope>SUBCELLULAR LOCATION</scope>
</reference>
<reference key="11">
    <citation type="journal article" date="2006" name="Microbiol. Immunol.">
        <title>Role of the septin Cdc10 in the virulence of Candida albicans.</title>
        <authorList>
            <person name="Gonzalez-Novo A."/>
            <person name="Labrador L."/>
            <person name="Jimenez A."/>
            <person name="Sanchez-Perez M."/>
            <person name="Jimenez J."/>
        </authorList>
    </citation>
    <scope>SUBCELLULAR LOCATION</scope>
</reference>
<reference key="12">
    <citation type="journal article" date="2007" name="Genome Res.">
        <title>Computational and experimental approaches double the number of known introns in the pathogenic yeast Candida albicans.</title>
        <authorList>
            <person name="Mitrovich Q.M."/>
            <person name="Tuch B.B."/>
            <person name="Guthrie C."/>
            <person name="Johnson A.D."/>
        </authorList>
    </citation>
    <scope>IDENTIFICATION OF INTRON</scope>
</reference>
<accession>P53705</accession>
<accession>A0A1D8PNF4</accession>
<accession>Q5AGC3</accession>
<accession>Q5AGQ9</accession>
<gene>
    <name type="primary">BUD4</name>
    <name type="synonym">INT1</name>
    <name type="ordered locus">CAALFM_C502470WA</name>
    <name type="ORF">CaO19.11733</name>
    <name type="ORF">CaO19.4257</name>
</gene>
<feature type="chain" id="PRO_0000174218" description="Bud site selection protein BUD4">
    <location>
        <begin position="1"/>
        <end position="1709"/>
    </location>
</feature>
<feature type="domain" description="PH" evidence="1">
    <location>
        <begin position="1575"/>
        <end position="1684"/>
    </location>
</feature>
<feature type="region of interest" description="Disordered" evidence="2">
    <location>
        <begin position="1"/>
        <end position="27"/>
    </location>
</feature>
<feature type="region of interest" description="Disordered" evidence="2">
    <location>
        <begin position="67"/>
        <end position="125"/>
    </location>
</feature>
<feature type="region of interest" description="Disordered" evidence="2">
    <location>
        <begin position="192"/>
        <end position="281"/>
    </location>
</feature>
<feature type="region of interest" description="Disordered" evidence="2">
    <location>
        <begin position="387"/>
        <end position="429"/>
    </location>
</feature>
<feature type="region of interest" description="Disordered" evidence="2">
    <location>
        <begin position="448"/>
        <end position="472"/>
    </location>
</feature>
<feature type="region of interest" description="Disordered" evidence="2">
    <location>
        <begin position="525"/>
        <end position="549"/>
    </location>
</feature>
<feature type="region of interest" description="Disordered" evidence="2">
    <location>
        <begin position="595"/>
        <end position="746"/>
    </location>
</feature>
<feature type="region of interest" description="Disordered" evidence="2">
    <location>
        <begin position="937"/>
        <end position="968"/>
    </location>
</feature>
<feature type="region of interest" description="Disordered" evidence="2">
    <location>
        <begin position="1186"/>
        <end position="1349"/>
    </location>
</feature>
<feature type="compositionally biased region" description="Basic and acidic residues" evidence="2">
    <location>
        <begin position="10"/>
        <end position="27"/>
    </location>
</feature>
<feature type="compositionally biased region" description="Low complexity" evidence="2">
    <location>
        <begin position="67"/>
        <end position="77"/>
    </location>
</feature>
<feature type="compositionally biased region" description="Polar residues" evidence="2">
    <location>
        <begin position="78"/>
        <end position="108"/>
    </location>
</feature>
<feature type="compositionally biased region" description="Basic and acidic residues" evidence="2">
    <location>
        <begin position="111"/>
        <end position="122"/>
    </location>
</feature>
<feature type="compositionally biased region" description="Polar residues" evidence="2">
    <location>
        <begin position="255"/>
        <end position="267"/>
    </location>
</feature>
<feature type="compositionally biased region" description="Low complexity" evidence="2">
    <location>
        <begin position="389"/>
        <end position="402"/>
    </location>
</feature>
<feature type="compositionally biased region" description="Basic and acidic residues" evidence="2">
    <location>
        <begin position="448"/>
        <end position="464"/>
    </location>
</feature>
<feature type="compositionally biased region" description="Basic and acidic residues" evidence="2">
    <location>
        <begin position="595"/>
        <end position="623"/>
    </location>
</feature>
<feature type="compositionally biased region" description="Basic and acidic residues" evidence="2">
    <location>
        <begin position="641"/>
        <end position="655"/>
    </location>
</feature>
<feature type="compositionally biased region" description="Basic and acidic residues" evidence="2">
    <location>
        <begin position="662"/>
        <end position="671"/>
    </location>
</feature>
<feature type="compositionally biased region" description="Polar residues" evidence="2">
    <location>
        <begin position="687"/>
        <end position="697"/>
    </location>
</feature>
<feature type="compositionally biased region" description="Basic and acidic residues" evidence="2">
    <location>
        <begin position="704"/>
        <end position="715"/>
    </location>
</feature>
<feature type="compositionally biased region" description="Low complexity" evidence="2">
    <location>
        <begin position="953"/>
        <end position="962"/>
    </location>
</feature>
<feature type="compositionally biased region" description="Polar residues" evidence="2">
    <location>
        <begin position="1186"/>
        <end position="1197"/>
    </location>
</feature>
<feature type="compositionally biased region" description="Low complexity" evidence="2">
    <location>
        <begin position="1222"/>
        <end position="1235"/>
    </location>
</feature>
<feature type="compositionally biased region" description="Polar residues" evidence="2">
    <location>
        <begin position="1286"/>
        <end position="1315"/>
    </location>
</feature>
<feature type="compositionally biased region" description="Basic residues" evidence="2">
    <location>
        <begin position="1325"/>
        <end position="1342"/>
    </location>
</feature>
<feature type="sequence conflict" description="In Ref. 4; AAA96019." evidence="8" ref="4">
    <original>P</original>
    <variation>S</variation>
    <location>
        <position position="158"/>
    </location>
</feature>
<feature type="sequence conflict" description="In Ref. 4; AAA96019." evidence="8" ref="4">
    <original>I</original>
    <variation>V</variation>
    <location>
        <position position="190"/>
    </location>
</feature>
<feature type="sequence conflict" description="In Ref. 4; AAA96019." evidence="8" ref="4">
    <original>A</original>
    <variation>V</variation>
    <location>
        <position position="224"/>
    </location>
</feature>
<feature type="sequence conflict" description="In Ref. 4; AAA96019." evidence="8" ref="4">
    <original>S</original>
    <variation>L</variation>
    <location>
        <position position="254"/>
    </location>
</feature>
<feature type="sequence conflict" description="In Ref. 4; AAA96019." evidence="8" ref="4">
    <original>H</original>
    <variation>R</variation>
    <location>
        <position position="313"/>
    </location>
</feature>
<feature type="sequence conflict" description="In Ref. 4; AAA96019." evidence="8" ref="4">
    <original>D</original>
    <variation>N</variation>
    <location>
        <position position="405"/>
    </location>
</feature>
<feature type="sequence conflict" description="In Ref. 4; AAA96019." evidence="8" ref="4">
    <original>T</original>
    <variation>V</variation>
    <location>
        <position position="413"/>
    </location>
</feature>
<feature type="sequence conflict" description="In Ref. 4; AAA96019." evidence="8" ref="4">
    <original>N</original>
    <variation>H</variation>
    <location>
        <position position="457"/>
    </location>
</feature>
<feature type="sequence conflict" description="In Ref. 4; AAA96019." evidence="8" ref="4">
    <original>KQI</original>
    <variation>RQT</variation>
    <location>
        <begin position="523"/>
        <end position="525"/>
    </location>
</feature>
<feature type="sequence conflict" description="In Ref. 4; AAA96019." evidence="8" ref="4">
    <original>F</original>
    <variation>L</variation>
    <location>
        <position position="714"/>
    </location>
</feature>
<feature type="sequence conflict" description="In Ref. 4; AAA96019." evidence="8" ref="4">
    <original>S</original>
    <variation>L</variation>
    <location>
        <position position="723"/>
    </location>
</feature>
<feature type="sequence conflict" description="In Ref. 4; AAA96019." evidence="8" ref="4">
    <original>S</original>
    <variation>F</variation>
    <location>
        <position position="845"/>
    </location>
</feature>
<feature type="sequence conflict" description="In Ref. 4; AAA96019." evidence="8" ref="4">
    <original>T</original>
    <variation>A</variation>
    <location>
        <position position="1148"/>
    </location>
</feature>
<feature type="sequence conflict" description="In Ref. 4; AAA96019." evidence="8" ref="4">
    <original>H</original>
    <variation>HHH</variation>
    <location>
        <position position="1340"/>
    </location>
</feature>
<feature type="sequence conflict" description="In Ref. 4; AAA96019." evidence="8" ref="4">
    <original>L</original>
    <variation>S</variation>
    <location>
        <position position="1509"/>
    </location>
</feature>
<feature type="sequence conflict" description="In Ref. 4; AAA96019." evidence="8" ref="4">
    <original>Q</original>
    <variation>QQQQ</variation>
    <location>
        <position position="1705"/>
    </location>
</feature>
<proteinExistence type="evidence at protein level"/>
<keyword id="KW-0130">Cell adhesion</keyword>
<keyword id="KW-0131">Cell cycle</keyword>
<keyword id="KW-0132">Cell division</keyword>
<keyword id="KW-1185">Reference proteome</keyword>
<evidence type="ECO:0000255" key="1">
    <source>
        <dbReference type="PROSITE-ProRule" id="PRU00145"/>
    </source>
</evidence>
<evidence type="ECO:0000256" key="2">
    <source>
        <dbReference type="SAM" id="MobiDB-lite"/>
    </source>
</evidence>
<evidence type="ECO:0000269" key="3">
    <source>
    </source>
</evidence>
<evidence type="ECO:0000269" key="4">
    <source>
    </source>
</evidence>
<evidence type="ECO:0000269" key="5">
    <source>
    </source>
</evidence>
<evidence type="ECO:0000269" key="6">
    <source>
    </source>
</evidence>
<evidence type="ECO:0000269" key="7">
    <source>
    </source>
</evidence>
<evidence type="ECO:0000305" key="8"/>
<dbReference type="EMBL" id="CP017627">
    <property type="protein sequence ID" value="AOW29672.1"/>
    <property type="molecule type" value="Genomic_DNA"/>
</dbReference>
<dbReference type="EMBL" id="U35070">
    <property type="protein sequence ID" value="AAA96019.1"/>
    <property type="molecule type" value="Genomic_DNA"/>
</dbReference>
<dbReference type="PIR" id="T18216">
    <property type="entry name" value="T18216"/>
</dbReference>
<dbReference type="RefSeq" id="XP_019330964.1">
    <property type="nucleotide sequence ID" value="XM_019475419.1"/>
</dbReference>
<dbReference type="BioGRID" id="1220689">
    <property type="interactions" value="2"/>
</dbReference>
<dbReference type="FunCoup" id="P53705">
    <property type="interactions" value="155"/>
</dbReference>
<dbReference type="STRING" id="237561.P53705"/>
<dbReference type="EnsemblFungi" id="C5_02470W_A-T">
    <property type="protein sequence ID" value="C5_02470W_A-T-p1"/>
    <property type="gene ID" value="C5_02470W_A"/>
</dbReference>
<dbReference type="GeneID" id="3637761"/>
<dbReference type="KEGG" id="cal:CAALFM_C502470WA"/>
<dbReference type="CGD" id="CAL0000198939">
    <property type="gene designation" value="INT1"/>
</dbReference>
<dbReference type="VEuPathDB" id="FungiDB:C5_02470W_A"/>
<dbReference type="eggNOG" id="ENOG502REBM">
    <property type="taxonomic scope" value="Eukaryota"/>
</dbReference>
<dbReference type="HOGENOM" id="CLU_240532_0_0_1"/>
<dbReference type="InParanoid" id="P53705"/>
<dbReference type="OrthoDB" id="2123378at2759"/>
<dbReference type="PHI-base" id="PHI:124"/>
<dbReference type="PRO" id="PR:P53705"/>
<dbReference type="Proteomes" id="UP000000559">
    <property type="component" value="Chromosome 5"/>
</dbReference>
<dbReference type="GO" id="GO:0009986">
    <property type="term" value="C:cell surface"/>
    <property type="evidence" value="ECO:0000314"/>
    <property type="project" value="CGD"/>
</dbReference>
<dbReference type="GO" id="GO:0005935">
    <property type="term" value="C:cellular bud neck"/>
    <property type="evidence" value="ECO:0000314"/>
    <property type="project" value="CGD"/>
</dbReference>
<dbReference type="GO" id="GO:0000142">
    <property type="term" value="C:cellular bud neck contractile ring"/>
    <property type="evidence" value="ECO:0000318"/>
    <property type="project" value="GO_Central"/>
</dbReference>
<dbReference type="GO" id="GO:0005940">
    <property type="term" value="C:septin ring"/>
    <property type="evidence" value="ECO:0000314"/>
    <property type="project" value="CGD"/>
</dbReference>
<dbReference type="GO" id="GO:0050839">
    <property type="term" value="F:cell adhesion molecule binding"/>
    <property type="evidence" value="ECO:0000315"/>
    <property type="project" value="CGD"/>
</dbReference>
<dbReference type="GO" id="GO:0005525">
    <property type="term" value="F:GTP binding"/>
    <property type="evidence" value="ECO:0000318"/>
    <property type="project" value="GO_Central"/>
</dbReference>
<dbReference type="GO" id="GO:0007120">
    <property type="term" value="P:axial cellular bud site selection"/>
    <property type="evidence" value="ECO:0000315"/>
    <property type="project" value="CGD"/>
</dbReference>
<dbReference type="GO" id="GO:0051701">
    <property type="term" value="P:biological process involved in interaction with host"/>
    <property type="evidence" value="ECO:0000315"/>
    <property type="project" value="CGD"/>
</dbReference>
<dbReference type="GO" id="GO:0044403">
    <property type="term" value="P:biological process involved in symbiotic interaction"/>
    <property type="evidence" value="ECO:0000315"/>
    <property type="project" value="CGD"/>
</dbReference>
<dbReference type="GO" id="GO:0007155">
    <property type="term" value="P:cell adhesion"/>
    <property type="evidence" value="ECO:0000315"/>
    <property type="project" value="CGD"/>
</dbReference>
<dbReference type="GO" id="GO:0031589">
    <property type="term" value="P:cell-substrate adhesion"/>
    <property type="evidence" value="ECO:0000315"/>
    <property type="project" value="CGD"/>
</dbReference>
<dbReference type="GO" id="GO:0030447">
    <property type="term" value="P:filamentous growth"/>
    <property type="evidence" value="ECO:0000315"/>
    <property type="project" value="CGD"/>
</dbReference>
<dbReference type="GO" id="GO:0044182">
    <property type="term" value="P:filamentous growth of a population of unicellular organisms"/>
    <property type="evidence" value="ECO:0000315"/>
    <property type="project" value="CGD"/>
</dbReference>
<dbReference type="GO" id="GO:0000280">
    <property type="term" value="P:nuclear division"/>
    <property type="evidence" value="ECO:0000316"/>
    <property type="project" value="CGD"/>
</dbReference>
<dbReference type="GO" id="GO:0097271">
    <property type="term" value="P:protein localization to bud neck"/>
    <property type="evidence" value="ECO:0000318"/>
    <property type="project" value="GO_Central"/>
</dbReference>
<dbReference type="CDD" id="cd13278">
    <property type="entry name" value="PH_Bud4"/>
    <property type="match status" value="1"/>
</dbReference>
<dbReference type="Gene3D" id="2.30.29.30">
    <property type="entry name" value="Pleckstrin-homology domain (PH domain)/Phosphotyrosine-binding domain (PTB)"/>
    <property type="match status" value="1"/>
</dbReference>
<dbReference type="InterPro" id="IPR052007">
    <property type="entry name" value="Bud4"/>
</dbReference>
<dbReference type="InterPro" id="IPR011993">
    <property type="entry name" value="PH-like_dom_sf"/>
</dbReference>
<dbReference type="InterPro" id="IPR001849">
    <property type="entry name" value="PH_domain"/>
</dbReference>
<dbReference type="PANTHER" id="PTHR36100">
    <property type="entry name" value="BUD SITE SELECTION PROTEIN 4"/>
    <property type="match status" value="1"/>
</dbReference>
<dbReference type="PANTHER" id="PTHR36100:SF1">
    <property type="entry name" value="BUD SITE SELECTION PROTEIN 4"/>
    <property type="match status" value="1"/>
</dbReference>
<dbReference type="Pfam" id="PF00169">
    <property type="entry name" value="PH"/>
    <property type="match status" value="1"/>
</dbReference>
<dbReference type="SMART" id="SM00233">
    <property type="entry name" value="PH"/>
    <property type="match status" value="1"/>
</dbReference>
<dbReference type="SUPFAM" id="SSF50729">
    <property type="entry name" value="PH domain-like"/>
    <property type="match status" value="1"/>
</dbReference>
<dbReference type="PROSITE" id="PS50003">
    <property type="entry name" value="PH_DOMAIN"/>
    <property type="match status" value="1"/>
</dbReference>
<protein>
    <recommendedName>
        <fullName>Bud site selection protein BUD4</fullName>
    </recommendedName>
    <alternativeName>
        <fullName>Alpha-INT1</fullName>
    </alternativeName>
    <alternativeName>
        <fullName>Integrin alpha chain-like protein</fullName>
    </alternativeName>
</protein>